<protein>
    <recommendedName>
        <fullName evidence="1">Ribulose bisphosphate carboxylase large chain</fullName>
        <shortName evidence="1">RuBisCO large subunit</shortName>
        <ecNumber evidence="1">4.1.1.39</ecNumber>
    </recommendedName>
</protein>
<accession>P28379</accession>
<proteinExistence type="inferred from homology"/>
<geneLocation type="chloroplast"/>
<gene>
    <name evidence="1" type="primary">rbcL</name>
</gene>
<reference key="1">
    <citation type="journal article" date="1992" name="Science">
        <title>Carnivorous plants: phylogeny and structural evolution.</title>
        <authorList>
            <person name="Albert V.A."/>
            <person name="Williams S.E."/>
            <person name="Chase M.W."/>
        </authorList>
    </citation>
    <scope>NUCLEOTIDE SEQUENCE [GENOMIC DNA]</scope>
</reference>
<feature type="chain" id="PRO_0000062358" description="Ribulose bisphosphate carboxylase large chain">
    <location>
        <begin position="1" status="less than"/>
        <end position="466"/>
    </location>
</feature>
<feature type="active site" description="Proton acceptor" evidence="1">
    <location>
        <position position="165"/>
    </location>
</feature>
<feature type="active site" description="Proton acceptor" evidence="1">
    <location>
        <position position="284"/>
    </location>
</feature>
<feature type="binding site" description="in homodimeric partner" evidence="1">
    <location>
        <position position="113"/>
    </location>
    <ligand>
        <name>substrate</name>
    </ligand>
</feature>
<feature type="binding site" evidence="1">
    <location>
        <position position="163"/>
    </location>
    <ligand>
        <name>substrate</name>
    </ligand>
</feature>
<feature type="binding site" evidence="1">
    <location>
        <position position="167"/>
    </location>
    <ligand>
        <name>substrate</name>
    </ligand>
</feature>
<feature type="binding site" description="via carbamate group" evidence="1">
    <location>
        <position position="191"/>
    </location>
    <ligand>
        <name>Mg(2+)</name>
        <dbReference type="ChEBI" id="CHEBI:18420"/>
    </ligand>
</feature>
<feature type="binding site" evidence="1">
    <location>
        <position position="193"/>
    </location>
    <ligand>
        <name>Mg(2+)</name>
        <dbReference type="ChEBI" id="CHEBI:18420"/>
    </ligand>
</feature>
<feature type="binding site" evidence="1">
    <location>
        <position position="194"/>
    </location>
    <ligand>
        <name>Mg(2+)</name>
        <dbReference type="ChEBI" id="CHEBI:18420"/>
    </ligand>
</feature>
<feature type="binding site" evidence="1">
    <location>
        <position position="285"/>
    </location>
    <ligand>
        <name>substrate</name>
    </ligand>
</feature>
<feature type="binding site" evidence="1">
    <location>
        <position position="317"/>
    </location>
    <ligand>
        <name>substrate</name>
    </ligand>
</feature>
<feature type="binding site" evidence="1">
    <location>
        <position position="369"/>
    </location>
    <ligand>
        <name>substrate</name>
    </ligand>
</feature>
<feature type="site" description="Transition state stabilizer" evidence="1">
    <location>
        <position position="324"/>
    </location>
</feature>
<feature type="modified residue" description="N6,N6,N6-trimethyllysine" evidence="1">
    <location>
        <position position="4"/>
    </location>
</feature>
<feature type="modified residue" description="N6-carboxylysine" evidence="1">
    <location>
        <position position="191"/>
    </location>
</feature>
<feature type="disulfide bond" description="Interchain; in linked form" evidence="1">
    <location>
        <position position="237"/>
    </location>
</feature>
<feature type="non-terminal residue">
    <location>
        <position position="1"/>
    </location>
</feature>
<evidence type="ECO:0000255" key="1">
    <source>
        <dbReference type="HAMAP-Rule" id="MF_01338"/>
    </source>
</evidence>
<comment type="function">
    <text evidence="1">RuBisCO catalyzes two reactions: the carboxylation of D-ribulose 1,5-bisphosphate, the primary event in carbon dioxide fixation, as well as the oxidative fragmentation of the pentose substrate in the photorespiration process. Both reactions occur simultaneously and in competition at the same active site.</text>
</comment>
<comment type="catalytic activity">
    <reaction evidence="1">
        <text>2 (2R)-3-phosphoglycerate + 2 H(+) = D-ribulose 1,5-bisphosphate + CO2 + H2O</text>
        <dbReference type="Rhea" id="RHEA:23124"/>
        <dbReference type="ChEBI" id="CHEBI:15377"/>
        <dbReference type="ChEBI" id="CHEBI:15378"/>
        <dbReference type="ChEBI" id="CHEBI:16526"/>
        <dbReference type="ChEBI" id="CHEBI:57870"/>
        <dbReference type="ChEBI" id="CHEBI:58272"/>
        <dbReference type="EC" id="4.1.1.39"/>
    </reaction>
</comment>
<comment type="catalytic activity">
    <reaction evidence="1">
        <text>D-ribulose 1,5-bisphosphate + O2 = 2-phosphoglycolate + (2R)-3-phosphoglycerate + 2 H(+)</text>
        <dbReference type="Rhea" id="RHEA:36631"/>
        <dbReference type="ChEBI" id="CHEBI:15378"/>
        <dbReference type="ChEBI" id="CHEBI:15379"/>
        <dbReference type="ChEBI" id="CHEBI:57870"/>
        <dbReference type="ChEBI" id="CHEBI:58033"/>
        <dbReference type="ChEBI" id="CHEBI:58272"/>
    </reaction>
</comment>
<comment type="cofactor">
    <cofactor evidence="1">
        <name>Mg(2+)</name>
        <dbReference type="ChEBI" id="CHEBI:18420"/>
    </cofactor>
    <text evidence="1">Binds 1 Mg(2+) ion per subunit.</text>
</comment>
<comment type="subunit">
    <text evidence="1">Heterohexadecamer of 8 large chains and 8 small chains; disulfide-linked. The disulfide link is formed within the large subunit homodimers.</text>
</comment>
<comment type="subcellular location">
    <subcellularLocation>
        <location>Plastid</location>
        <location>Chloroplast</location>
    </subcellularLocation>
</comment>
<comment type="PTM">
    <text evidence="1">The disulfide bond which can form in the large chain dimeric partners within the hexadecamer appears to be associated with oxidative stress and protein turnover.</text>
</comment>
<comment type="miscellaneous">
    <text evidence="1">The basic functional RuBisCO is composed of a large chain homodimer in a 'head-to-tail' conformation. In form I RuBisCO this homodimer is arranged in a barrel-like tetramer with the small subunits forming a tetrameric 'cap' on each end of the 'barrel'.</text>
</comment>
<comment type="similarity">
    <text evidence="1">Belongs to the RuBisCO large chain family. Type I subfamily.</text>
</comment>
<keyword id="KW-0113">Calvin cycle</keyword>
<keyword id="KW-0120">Carbon dioxide fixation</keyword>
<keyword id="KW-0150">Chloroplast</keyword>
<keyword id="KW-1015">Disulfide bond</keyword>
<keyword id="KW-0456">Lyase</keyword>
<keyword id="KW-0460">Magnesium</keyword>
<keyword id="KW-0479">Metal-binding</keyword>
<keyword id="KW-0488">Methylation</keyword>
<keyword id="KW-0503">Monooxygenase</keyword>
<keyword id="KW-0560">Oxidoreductase</keyword>
<keyword id="KW-0601">Photorespiration</keyword>
<keyword id="KW-0602">Photosynthesis</keyword>
<keyword id="KW-0934">Plastid</keyword>
<sequence length="466" mass="51588">VGFKAGVKEYKLTYYTPEYETKDTDILAAFRVTPQPGVPPEEAGAAVAAESSTGTWTTVWTDGLTSLDRYKGRCYNIEPVPGETDQYICYVAYPLDLFEEGSVTNMFTSIVGNVFGFKALRALRLEDLRIPPAYIKTFQGPPHGIQVERDKLNKYGRPLLGCTIKPKLGLSAKNYGRACYECLRGGLDFTKDDENVNSQPFMRWRDRFLFCAEAIYKSQAETGEIKGHYLNATAGTCEEMIKRAVFARELGVPIVMHDYLTGGFTANTSLAHYCRDNGLLLHIHRAMHAVIDRQKNHGMHFRVLAKALRLSGGDHIHAGTVVGKLEGERDITLGFVDLLRDDFVEKDRSRGIYFTQDWVSLPGVIPVASGGIHVWHMPALTEIFGDDSVLQFGGGTLGHPWGNAPGAVANRVAVEACVQARNEGRDLAAEGNAIIREASKWSPELAAACEVWKELKFEFQAVDTLD</sequence>
<organism>
    <name type="scientific">Aphelandra sinclairiana</name>
    <name type="common">Orange shrimp plant</name>
    <name type="synonym">Panama Queen</name>
    <dbReference type="NCBI Taxonomy" id="4187"/>
    <lineage>
        <taxon>Eukaryota</taxon>
        <taxon>Viridiplantae</taxon>
        <taxon>Streptophyta</taxon>
        <taxon>Embryophyta</taxon>
        <taxon>Tracheophyta</taxon>
        <taxon>Spermatophyta</taxon>
        <taxon>Magnoliopsida</taxon>
        <taxon>eudicotyledons</taxon>
        <taxon>Gunneridae</taxon>
        <taxon>Pentapetalae</taxon>
        <taxon>asterids</taxon>
        <taxon>lamiids</taxon>
        <taxon>Lamiales</taxon>
        <taxon>Acanthaceae</taxon>
        <taxon>Acanthoideae</taxon>
        <taxon>Acantheae</taxon>
        <taxon>Aphelandra</taxon>
    </lineage>
</organism>
<name>RBL_APHSI</name>
<dbReference type="EC" id="4.1.1.39" evidence="1"/>
<dbReference type="EMBL" id="L01884">
    <property type="status" value="NOT_ANNOTATED_CDS"/>
    <property type="molecule type" value="Genomic_DNA"/>
</dbReference>
<dbReference type="SMR" id="P28379"/>
<dbReference type="GO" id="GO:0009507">
    <property type="term" value="C:chloroplast"/>
    <property type="evidence" value="ECO:0007669"/>
    <property type="project" value="UniProtKB-SubCell"/>
</dbReference>
<dbReference type="GO" id="GO:0000287">
    <property type="term" value="F:magnesium ion binding"/>
    <property type="evidence" value="ECO:0007669"/>
    <property type="project" value="InterPro"/>
</dbReference>
<dbReference type="GO" id="GO:0004497">
    <property type="term" value="F:monooxygenase activity"/>
    <property type="evidence" value="ECO:0007669"/>
    <property type="project" value="UniProtKB-KW"/>
</dbReference>
<dbReference type="GO" id="GO:0016984">
    <property type="term" value="F:ribulose-bisphosphate carboxylase activity"/>
    <property type="evidence" value="ECO:0007669"/>
    <property type="project" value="UniProtKB-EC"/>
</dbReference>
<dbReference type="GO" id="GO:0009853">
    <property type="term" value="P:photorespiration"/>
    <property type="evidence" value="ECO:0007669"/>
    <property type="project" value="UniProtKB-KW"/>
</dbReference>
<dbReference type="GO" id="GO:0019253">
    <property type="term" value="P:reductive pentose-phosphate cycle"/>
    <property type="evidence" value="ECO:0007669"/>
    <property type="project" value="UniProtKB-KW"/>
</dbReference>
<dbReference type="CDD" id="cd08212">
    <property type="entry name" value="RuBisCO_large_I"/>
    <property type="match status" value="1"/>
</dbReference>
<dbReference type="FunFam" id="3.20.20.110:FF:000001">
    <property type="entry name" value="Ribulose bisphosphate carboxylase large chain"/>
    <property type="match status" value="1"/>
</dbReference>
<dbReference type="FunFam" id="3.30.70.150:FF:000001">
    <property type="entry name" value="Ribulose bisphosphate carboxylase large chain"/>
    <property type="match status" value="1"/>
</dbReference>
<dbReference type="Gene3D" id="3.20.20.110">
    <property type="entry name" value="Ribulose bisphosphate carboxylase, large subunit, C-terminal domain"/>
    <property type="match status" value="1"/>
</dbReference>
<dbReference type="Gene3D" id="3.30.70.150">
    <property type="entry name" value="RuBisCO large subunit, N-terminal domain"/>
    <property type="match status" value="1"/>
</dbReference>
<dbReference type="HAMAP" id="MF_01338">
    <property type="entry name" value="RuBisCO_L_type1"/>
    <property type="match status" value="1"/>
</dbReference>
<dbReference type="InterPro" id="IPR033966">
    <property type="entry name" value="RuBisCO"/>
</dbReference>
<dbReference type="InterPro" id="IPR020878">
    <property type="entry name" value="RuBisCo_large_chain_AS"/>
</dbReference>
<dbReference type="InterPro" id="IPR000685">
    <property type="entry name" value="RuBisCO_lsu_C"/>
</dbReference>
<dbReference type="InterPro" id="IPR036376">
    <property type="entry name" value="RuBisCO_lsu_C_sf"/>
</dbReference>
<dbReference type="InterPro" id="IPR017443">
    <property type="entry name" value="RuBisCO_lsu_fd_N"/>
</dbReference>
<dbReference type="InterPro" id="IPR036422">
    <property type="entry name" value="RuBisCO_lsu_N_sf"/>
</dbReference>
<dbReference type="InterPro" id="IPR020888">
    <property type="entry name" value="RuBisCO_lsuI"/>
</dbReference>
<dbReference type="NCBIfam" id="NF003252">
    <property type="entry name" value="PRK04208.1"/>
    <property type="match status" value="1"/>
</dbReference>
<dbReference type="PANTHER" id="PTHR42704">
    <property type="entry name" value="RIBULOSE BISPHOSPHATE CARBOXYLASE"/>
    <property type="match status" value="1"/>
</dbReference>
<dbReference type="PANTHER" id="PTHR42704:SF16">
    <property type="entry name" value="RIBULOSE BISPHOSPHATE CARBOXYLASE LARGE CHAIN"/>
    <property type="match status" value="1"/>
</dbReference>
<dbReference type="Pfam" id="PF00016">
    <property type="entry name" value="RuBisCO_large"/>
    <property type="match status" value="1"/>
</dbReference>
<dbReference type="Pfam" id="PF02788">
    <property type="entry name" value="RuBisCO_large_N"/>
    <property type="match status" value="1"/>
</dbReference>
<dbReference type="SFLD" id="SFLDG01052">
    <property type="entry name" value="RuBisCO"/>
    <property type="match status" value="1"/>
</dbReference>
<dbReference type="SFLD" id="SFLDS00014">
    <property type="entry name" value="RuBisCO"/>
    <property type="match status" value="1"/>
</dbReference>
<dbReference type="SFLD" id="SFLDG00301">
    <property type="entry name" value="RuBisCO-like_proteins"/>
    <property type="match status" value="1"/>
</dbReference>
<dbReference type="SUPFAM" id="SSF51649">
    <property type="entry name" value="RuBisCo, C-terminal domain"/>
    <property type="match status" value="1"/>
</dbReference>
<dbReference type="SUPFAM" id="SSF54966">
    <property type="entry name" value="RuBisCO, large subunit, small (N-terminal) domain"/>
    <property type="match status" value="1"/>
</dbReference>
<dbReference type="PROSITE" id="PS00157">
    <property type="entry name" value="RUBISCO_LARGE"/>
    <property type="match status" value="1"/>
</dbReference>